<organism>
    <name type="scientific">Caenorhabditis elegans</name>
    <dbReference type="NCBI Taxonomy" id="6239"/>
    <lineage>
        <taxon>Eukaryota</taxon>
        <taxon>Metazoa</taxon>
        <taxon>Ecdysozoa</taxon>
        <taxon>Nematoda</taxon>
        <taxon>Chromadorea</taxon>
        <taxon>Rhabditida</taxon>
        <taxon>Rhabditina</taxon>
        <taxon>Rhabditomorpha</taxon>
        <taxon>Rhabditoidea</taxon>
        <taxon>Rhabditidae</taxon>
        <taxon>Peloderinae</taxon>
        <taxon>Caenorhabditis</taxon>
    </lineage>
</organism>
<keyword id="KW-0025">Alternative splicing</keyword>
<keyword id="KW-1015">Disulfide bond</keyword>
<keyword id="KW-0325">Glycoprotein</keyword>
<keyword id="KW-0378">Hydrolase</keyword>
<keyword id="KW-0472">Membrane</keyword>
<keyword id="KW-1185">Reference proteome</keyword>
<keyword id="KW-0735">Signal-anchor</keyword>
<keyword id="KW-0812">Transmembrane</keyword>
<keyword id="KW-1133">Transmembrane helix</keyword>
<name>ENPP1_CAEEL</name>
<reference key="1">
    <citation type="journal article" date="1998" name="Science">
        <title>Genome sequence of the nematode C. elegans: a platform for investigating biology.</title>
        <authorList>
            <consortium name="The C. elegans sequencing consortium"/>
        </authorList>
    </citation>
    <scope>NUCLEOTIDE SEQUENCE [LARGE SCALE GENOMIC DNA]</scope>
    <scope>ALTERNATIVE SPLICING</scope>
    <source>
        <strain>Bristol N2</strain>
    </source>
</reference>
<reference key="2">
    <citation type="journal article" date="2003" name="Nat. Biotechnol.">
        <title>Lectin affinity capture, isotope-coded tagging and mass spectrometry to identify N-linked glycoproteins.</title>
        <authorList>
            <person name="Kaji H."/>
            <person name="Saito H."/>
            <person name="Yamauchi Y."/>
            <person name="Shinkawa T."/>
            <person name="Taoka M."/>
            <person name="Hirabayashi J."/>
            <person name="Kasai K."/>
            <person name="Takahashi N."/>
            <person name="Isobe T."/>
        </authorList>
    </citation>
    <scope>GLYCOSYLATION [LARGE SCALE ANALYSIS] AT ASN-424</scope>
    <scope>IDENTIFICATION BY MASS SPECTROMETRY</scope>
    <source>
        <strain>Bristol N2</strain>
    </source>
</reference>
<reference key="3">
    <citation type="journal article" date="2007" name="Mol. Cell. Proteomics">
        <title>Proteomics reveals N-linked glycoprotein diversity in Caenorhabditis elegans and suggests an atypical translocation mechanism for integral membrane proteins.</title>
        <authorList>
            <person name="Kaji H."/>
            <person name="Kamiie J."/>
            <person name="Kawakami H."/>
            <person name="Kido K."/>
            <person name="Yamauchi Y."/>
            <person name="Shinkawa T."/>
            <person name="Taoka M."/>
            <person name="Takahashi N."/>
            <person name="Isobe T."/>
        </authorList>
    </citation>
    <scope>GLYCOSYLATION [LARGE SCALE ANALYSIS] AT ASN-424 AND ASN-649</scope>
    <scope>IDENTIFICATION BY MASS SPECTROMETRY</scope>
    <source>
        <strain>Bristol N2</strain>
    </source>
</reference>
<proteinExistence type="evidence at protein level"/>
<protein>
    <recommendedName>
        <fullName>Ectonucleotide pyrophosphatase/phosphodiesterase C27A7.1</fullName>
        <ecNumber>3.1.-.-</ecNumber>
    </recommendedName>
</protein>
<comment type="function">
    <text evidence="1">Probable phosphodiesterase.</text>
</comment>
<comment type="subcellular location">
    <subcellularLocation>
        <location evidence="5">Membrane</location>
        <topology evidence="5">Single-pass type II membrane protein</topology>
    </subcellularLocation>
</comment>
<comment type="alternative products">
    <event type="alternative splicing"/>
    <isoform>
        <id>P90754-1</id>
        <name>a</name>
        <sequence type="displayed"/>
    </isoform>
    <isoform>
        <id>P90754-2</id>
        <name>b</name>
        <sequence type="described" ref="VSP_020299"/>
    </isoform>
</comment>
<comment type="similarity">
    <text evidence="5">Belongs to the nucleotide pyrophosphatase/phosphodiesterase family.</text>
</comment>
<accession>P90754</accession>
<accession>Q2PJ70</accession>
<sequence>MRRSFYASSTENTPMMMTQARVLSTGTTDNGTIRYDEVDETKRWFNRRFCFLTVIGIAVLLLAMVVIVVIVLLLTQLKAANSNAQNAMSSSKVQLEELTRKLSQPLEQLGPTLERLSNMPGFPMGPSPTTQTPPGVPPISPIVTGPNTTPESPRRSPKARYEWKGCQNLGKCELSGYTKPPLVILSLDGFAREYVDRNIVQTLNHIADCGVKADKVYPSYPSKTFPNHYSIVTGLWPESHGITDNSVFDPTISPVLESMKSTKYEKFFEGEPIWSVYKRKTGKKANCLFWVGCAYNNSGYAPDVAPAYNQELPFRNRIDTVVEWLKLPVDERPGLITAYLHEPDNAGHYQVDEEDVDEKLAEIDENLDYLMSRLSEEKLLECINFAILSDHGMQLIDKTYYFQDYLDLKGLITAKGVVGRVYINDTTISVNDVVDKFRCKIDTVKTNTRSDVPTRKHYSRDPRVGEVLLEGRAGVTFYKSKADDYELSGDHGYDYFNPKMHTIFYARGPSFKQNTTISPYQNIQYMNLWMNLLGIEGAVETNGTIGFFDNILTNPPRRDNPTNVIGECPMIAFPSVLKCSGNVSAETLNQLSVKLTNCAFSPTNIPLYSDNHCFQNYCDNSVIVSRKGNDARRAIIEVLSRDEASNPSNFTFLNAKYQSNCPSHIPTGSLTIRQNSQLSSMVDERIDVPNNFLLKVLDPLQAKSMEYLNKFGKMYVISGTATDINHDGIADSNGSVITHIYRIMLICNSTWLLMNPPLCTDSDSMDTLSFIFPITEQSTIDCMSSDDILLDYTATIFDVERISGFQFGIGALSQNQNTIIRRKISTKLW</sequence>
<feature type="chain" id="PRO_0000248536" description="Ectonucleotide pyrophosphatase/phosphodiesterase C27A7.1">
    <location>
        <begin position="1"/>
        <end position="829"/>
    </location>
</feature>
<feature type="transmembrane region" description="Helical; Signal-anchor for type II membrane protein" evidence="2">
    <location>
        <begin position="54"/>
        <end position="74"/>
    </location>
</feature>
<feature type="active site" description="Nucleophile" evidence="1">
    <location>
        <position position="224"/>
    </location>
</feature>
<feature type="glycosylation site" description="N-linked (GlcNAc...) asparagine" evidence="2">
    <location>
        <position position="296"/>
    </location>
</feature>
<feature type="glycosylation site" description="N-linked (GlcNAc...) asparagine" evidence="3 4">
    <location>
        <position position="424"/>
    </location>
</feature>
<feature type="glycosylation site" description="N-linked (GlcNAc...) asparagine" evidence="2">
    <location>
        <position position="514"/>
    </location>
</feature>
<feature type="glycosylation site" description="N-linked (GlcNAc...) asparagine" evidence="2">
    <location>
        <position position="542"/>
    </location>
</feature>
<feature type="glycosylation site" description="N-linked (GlcNAc...) asparagine" evidence="2">
    <location>
        <position position="582"/>
    </location>
</feature>
<feature type="glycosylation site" description="N-linked (GlcNAc...) asparagine" evidence="4">
    <location>
        <position position="649"/>
    </location>
</feature>
<feature type="glycosylation site" description="N-linked (GlcNAc...) asparagine" evidence="2">
    <location>
        <position position="733"/>
    </location>
</feature>
<feature type="glycosylation site" description="N-linked (GlcNAc...) asparagine" evidence="2">
    <location>
        <position position="748"/>
    </location>
</feature>
<feature type="disulfide bond" evidence="1">
    <location>
        <begin position="439"/>
        <end position="782"/>
    </location>
</feature>
<feature type="splice variant" id="VSP_020299" description="In isoform b." evidence="5">
    <original>MRRSFYASSTEN</original>
    <variation>MKTNLAQ</variation>
    <location>
        <begin position="1"/>
        <end position="12"/>
    </location>
</feature>
<dbReference type="EC" id="3.1.-.-"/>
<dbReference type="EMBL" id="Z81041">
    <property type="protein sequence ID" value="CAB02784.1"/>
    <property type="molecule type" value="Genomic_DNA"/>
</dbReference>
<dbReference type="EMBL" id="Z81041">
    <property type="protein sequence ID" value="CAJ55253.1"/>
    <property type="molecule type" value="Genomic_DNA"/>
</dbReference>
<dbReference type="PIR" id="T19494">
    <property type="entry name" value="T19494"/>
</dbReference>
<dbReference type="RefSeq" id="NP_001041085.1">
    <molecule id="P90754-1"/>
    <property type="nucleotide sequence ID" value="NM_001047620.2"/>
</dbReference>
<dbReference type="RefSeq" id="NP_001041086.1">
    <molecule id="P90754-2"/>
    <property type="nucleotide sequence ID" value="NM_001047621.1"/>
</dbReference>
<dbReference type="SMR" id="P90754"/>
<dbReference type="BioGRID" id="44686">
    <property type="interactions" value="2"/>
</dbReference>
<dbReference type="FunCoup" id="P90754">
    <property type="interactions" value="318"/>
</dbReference>
<dbReference type="IntAct" id="P90754">
    <property type="interactions" value="1"/>
</dbReference>
<dbReference type="STRING" id="6239.C27A7.1a.1"/>
<dbReference type="iPTMnet" id="P90754"/>
<dbReference type="PaxDb" id="6239-C27A7.1a"/>
<dbReference type="EnsemblMetazoa" id="C27A7.1a.1">
    <molecule id="P90754-1"/>
    <property type="protein sequence ID" value="C27A7.1a.1"/>
    <property type="gene ID" value="WBGene00007753"/>
</dbReference>
<dbReference type="EnsemblMetazoa" id="C27A7.1b.1">
    <molecule id="P90754-2"/>
    <property type="protein sequence ID" value="C27A7.1b.1"/>
    <property type="gene ID" value="WBGene00007753"/>
</dbReference>
<dbReference type="KEGG" id="cel:CELE_C27A7.1"/>
<dbReference type="UCSC" id="C27A7.1a">
    <molecule id="P90754-1"/>
    <property type="organism name" value="c. elegans"/>
</dbReference>
<dbReference type="AGR" id="WB:WBGene00007753"/>
<dbReference type="CTD" id="179663"/>
<dbReference type="WormBase" id="C27A7.1a">
    <molecule id="P90754-1"/>
    <property type="protein sequence ID" value="CE08403"/>
    <property type="gene ID" value="WBGene00007753"/>
    <property type="gene designation" value="enpp-1"/>
</dbReference>
<dbReference type="WormBase" id="C27A7.1b">
    <molecule id="P90754-2"/>
    <property type="protein sequence ID" value="CE39478"/>
    <property type="gene ID" value="WBGene00007753"/>
    <property type="gene designation" value="enpp-1"/>
</dbReference>
<dbReference type="eggNOG" id="KOG2645">
    <property type="taxonomic scope" value="Eukaryota"/>
</dbReference>
<dbReference type="GeneTree" id="ENSGT00970000196710"/>
<dbReference type="InParanoid" id="P90754"/>
<dbReference type="OMA" id="RAHIFEA"/>
<dbReference type="OrthoDB" id="415411at2759"/>
<dbReference type="PhylomeDB" id="P90754"/>
<dbReference type="Reactome" id="R-CEL-196843">
    <property type="pathway name" value="Vitamin B2 (riboflavin) metabolism"/>
</dbReference>
<dbReference type="PRO" id="PR:P90754"/>
<dbReference type="Proteomes" id="UP000001940">
    <property type="component" value="Chromosome V"/>
</dbReference>
<dbReference type="Bgee" id="WBGene00007753">
    <property type="expression patterns" value="Expressed in adult organism and 4 other cell types or tissues"/>
</dbReference>
<dbReference type="ExpressionAtlas" id="P90754">
    <property type="expression patterns" value="baseline and differential"/>
</dbReference>
<dbReference type="GO" id="GO:0016020">
    <property type="term" value="C:membrane"/>
    <property type="evidence" value="ECO:0007669"/>
    <property type="project" value="UniProtKB-SubCell"/>
</dbReference>
<dbReference type="GO" id="GO:0016787">
    <property type="term" value="F:hydrolase activity"/>
    <property type="evidence" value="ECO:0007669"/>
    <property type="project" value="UniProtKB-KW"/>
</dbReference>
<dbReference type="CDD" id="cd16018">
    <property type="entry name" value="Enpp"/>
    <property type="match status" value="1"/>
</dbReference>
<dbReference type="Gene3D" id="3.40.720.10">
    <property type="entry name" value="Alkaline Phosphatase, subunit A"/>
    <property type="match status" value="1"/>
</dbReference>
<dbReference type="Gene3D" id="3.40.570.10">
    <property type="entry name" value="Extracellular Endonuclease, subunit A"/>
    <property type="match status" value="1"/>
</dbReference>
<dbReference type="InterPro" id="IPR017850">
    <property type="entry name" value="Alkaline_phosphatase_core_sf"/>
</dbReference>
<dbReference type="InterPro" id="IPR044929">
    <property type="entry name" value="DNA/RNA_non-sp_Endonuclease_sf"/>
</dbReference>
<dbReference type="InterPro" id="IPR002591">
    <property type="entry name" value="Phosphodiest/P_Trfase"/>
</dbReference>
<dbReference type="PANTHER" id="PTHR10151">
    <property type="entry name" value="ECTONUCLEOTIDE PYROPHOSPHATASE/PHOSPHODIESTERASE"/>
    <property type="match status" value="1"/>
</dbReference>
<dbReference type="PANTHER" id="PTHR10151:SF121">
    <property type="entry name" value="ECTONUCLEOTIDE PYROPHOSPHATASE_PHOSPHODIESTERASE C27A7.1"/>
    <property type="match status" value="1"/>
</dbReference>
<dbReference type="Pfam" id="PF01663">
    <property type="entry name" value="Phosphodiest"/>
    <property type="match status" value="1"/>
</dbReference>
<dbReference type="SUPFAM" id="SSF53649">
    <property type="entry name" value="Alkaline phosphatase-like"/>
    <property type="match status" value="1"/>
</dbReference>
<evidence type="ECO:0000250" key="1"/>
<evidence type="ECO:0000255" key="2"/>
<evidence type="ECO:0000269" key="3">
    <source>
    </source>
</evidence>
<evidence type="ECO:0000269" key="4">
    <source>
    </source>
</evidence>
<evidence type="ECO:0000305" key="5"/>
<evidence type="ECO:0000312" key="6">
    <source>
        <dbReference type="WormBase" id="C27A7.1a"/>
    </source>
</evidence>
<gene>
    <name evidence="6" type="primary">enpp-1</name>
    <name evidence="6" type="ORF">C27A7.1</name>
</gene>